<protein>
    <recommendedName>
        <fullName evidence="3">Histidine protein methyltransferase 1 homolog</fullName>
        <ecNumber evidence="1">2.1.1.85</ecNumber>
    </recommendedName>
    <alternativeName>
        <fullName evidence="4">Methyltransferase-like protein 18</fullName>
    </alternativeName>
</protein>
<organism>
    <name type="scientific">Rattus norvegicus</name>
    <name type="common">Rat</name>
    <dbReference type="NCBI Taxonomy" id="10116"/>
    <lineage>
        <taxon>Eukaryota</taxon>
        <taxon>Metazoa</taxon>
        <taxon>Chordata</taxon>
        <taxon>Craniata</taxon>
        <taxon>Vertebrata</taxon>
        <taxon>Euteleostomi</taxon>
        <taxon>Mammalia</taxon>
        <taxon>Eutheria</taxon>
        <taxon>Euarchontoglires</taxon>
        <taxon>Glires</taxon>
        <taxon>Rodentia</taxon>
        <taxon>Myomorpha</taxon>
        <taxon>Muroidea</taxon>
        <taxon>Muridae</taxon>
        <taxon>Murinae</taxon>
        <taxon>Rattus</taxon>
    </lineage>
</organism>
<dbReference type="EC" id="2.1.1.85" evidence="1"/>
<dbReference type="EMBL" id="BC098702">
    <property type="protein sequence ID" value="AAH98702.1"/>
    <property type="molecule type" value="mRNA"/>
</dbReference>
<dbReference type="RefSeq" id="NP_001020839.1">
    <property type="nucleotide sequence ID" value="NM_001025668.1"/>
</dbReference>
<dbReference type="RefSeq" id="XP_006250217.1">
    <property type="nucleotide sequence ID" value="XM_006250155.5"/>
</dbReference>
<dbReference type="SMR" id="Q4KM84"/>
<dbReference type="FunCoup" id="Q4KM84">
    <property type="interactions" value="2892"/>
</dbReference>
<dbReference type="STRING" id="10116.ENSRNOP00000003480"/>
<dbReference type="PhosphoSitePlus" id="Q4KM84"/>
<dbReference type="PaxDb" id="10116-ENSRNOP00000003480"/>
<dbReference type="Ensembl" id="ENSRNOT00000003636.5">
    <property type="protein sequence ID" value="ENSRNOP00000003480.3"/>
    <property type="gene ID" value="ENSRNOG00000025189.4"/>
</dbReference>
<dbReference type="GeneID" id="304928"/>
<dbReference type="KEGG" id="rno:304928"/>
<dbReference type="UCSC" id="RGD:1306783">
    <property type="organism name" value="rat"/>
</dbReference>
<dbReference type="AGR" id="RGD:1306783"/>
<dbReference type="CTD" id="92342"/>
<dbReference type="RGD" id="1306783">
    <property type="gene designation" value="Mettl18"/>
</dbReference>
<dbReference type="eggNOG" id="KOG2920">
    <property type="taxonomic scope" value="Eukaryota"/>
</dbReference>
<dbReference type="GeneTree" id="ENSGT00390000000464"/>
<dbReference type="HOGENOM" id="CLU_038704_0_1_1"/>
<dbReference type="InParanoid" id="Q4KM84"/>
<dbReference type="OMA" id="LCKCRFF"/>
<dbReference type="OrthoDB" id="1723750at2759"/>
<dbReference type="PhylomeDB" id="Q4KM84"/>
<dbReference type="TreeFam" id="TF320884"/>
<dbReference type="PRO" id="PR:Q4KM84"/>
<dbReference type="Proteomes" id="UP000002494">
    <property type="component" value="Chromosome 13"/>
</dbReference>
<dbReference type="Bgee" id="ENSRNOG00000025189">
    <property type="expression patterns" value="Expressed in thymus and 19 other cell types or tissues"/>
</dbReference>
<dbReference type="GO" id="GO:0005829">
    <property type="term" value="C:cytosol"/>
    <property type="evidence" value="ECO:0000250"/>
    <property type="project" value="UniProtKB"/>
</dbReference>
<dbReference type="GO" id="GO:0005730">
    <property type="term" value="C:nucleolus"/>
    <property type="evidence" value="ECO:0000250"/>
    <property type="project" value="UniProtKB"/>
</dbReference>
<dbReference type="GO" id="GO:0005634">
    <property type="term" value="C:nucleus"/>
    <property type="evidence" value="ECO:0000250"/>
    <property type="project" value="UniProtKB"/>
</dbReference>
<dbReference type="GO" id="GO:0032991">
    <property type="term" value="C:protein-containing complex"/>
    <property type="evidence" value="ECO:0000266"/>
    <property type="project" value="RGD"/>
</dbReference>
<dbReference type="GO" id="GO:0031072">
    <property type="term" value="F:heat shock protein binding"/>
    <property type="evidence" value="ECO:0000266"/>
    <property type="project" value="RGD"/>
</dbReference>
<dbReference type="GO" id="GO:0018064">
    <property type="term" value="F:protein-L-histidine N-tele-methyltransferase activity"/>
    <property type="evidence" value="ECO:0000250"/>
    <property type="project" value="UniProtKB"/>
</dbReference>
<dbReference type="GO" id="GO:0018026">
    <property type="term" value="P:peptidyl-lysine monomethylation"/>
    <property type="evidence" value="ECO:0000250"/>
    <property type="project" value="UniProtKB"/>
</dbReference>
<dbReference type="GO" id="GO:0090069">
    <property type="term" value="P:regulation of ribosome biogenesis"/>
    <property type="evidence" value="ECO:0000250"/>
    <property type="project" value="UniProtKB"/>
</dbReference>
<dbReference type="GO" id="GO:2000232">
    <property type="term" value="P:regulation of rRNA processing"/>
    <property type="evidence" value="ECO:0000250"/>
    <property type="project" value="UniProtKB"/>
</dbReference>
<dbReference type="GO" id="GO:0006417">
    <property type="term" value="P:regulation of translation"/>
    <property type="evidence" value="ECO:0000250"/>
    <property type="project" value="UniProtKB"/>
</dbReference>
<dbReference type="GO" id="GO:0006448">
    <property type="term" value="P:regulation of translational elongation"/>
    <property type="evidence" value="ECO:0000250"/>
    <property type="project" value="UniProtKB"/>
</dbReference>
<dbReference type="CDD" id="cd02440">
    <property type="entry name" value="AdoMet_MTases"/>
    <property type="match status" value="1"/>
</dbReference>
<dbReference type="FunFam" id="3.40.50.150:FF:000268">
    <property type="entry name" value="Histidine protein methyltransferase 1 homolog"/>
    <property type="match status" value="1"/>
</dbReference>
<dbReference type="Gene3D" id="3.40.50.150">
    <property type="entry name" value="Vaccinia Virus protein VP39"/>
    <property type="match status" value="1"/>
</dbReference>
<dbReference type="InterPro" id="IPR019410">
    <property type="entry name" value="Methyltransf_16"/>
</dbReference>
<dbReference type="InterPro" id="IPR029063">
    <property type="entry name" value="SAM-dependent_MTases_sf"/>
</dbReference>
<dbReference type="PANTHER" id="PTHR14614">
    <property type="entry name" value="HEPATOCELLULAR CARCINOMA-ASSOCIATED ANTIGEN"/>
    <property type="match status" value="1"/>
</dbReference>
<dbReference type="PANTHER" id="PTHR14614:SF39">
    <property type="entry name" value="HISTIDINE PROTEIN METHYLTRANSFERASE 1 HOMOLOG"/>
    <property type="match status" value="1"/>
</dbReference>
<dbReference type="Pfam" id="PF10294">
    <property type="entry name" value="Methyltransf_16"/>
    <property type="match status" value="1"/>
</dbReference>
<dbReference type="Pfam" id="PF06325">
    <property type="entry name" value="PrmA"/>
    <property type="match status" value="1"/>
</dbReference>
<dbReference type="SUPFAM" id="SSF53335">
    <property type="entry name" value="S-adenosyl-L-methionine-dependent methyltransferases"/>
    <property type="match status" value="1"/>
</dbReference>
<evidence type="ECO:0000250" key="1">
    <source>
        <dbReference type="UniProtKB" id="O95568"/>
    </source>
</evidence>
<evidence type="ECO:0000256" key="2">
    <source>
        <dbReference type="SAM" id="MobiDB-lite"/>
    </source>
</evidence>
<evidence type="ECO:0000305" key="3"/>
<evidence type="ECO:0000312" key="4">
    <source>
        <dbReference type="RGD" id="1306783"/>
    </source>
</evidence>
<proteinExistence type="evidence at transcript level"/>
<sequence length="362" mass="40009">MAFQFNFSIEEDLENKLTSLDDGTCVLKSQKGKEDKNQSTELPGLPQDRLWKCSSLGSAASSEDTDSPPSTADRSGVPEACEKQPSLKPAKEHVIPKDCDQVLENKVLEMLPGSQHVSTAVVKTISLKEKFPGENIVSQSFSSHSDLIPGVYEGGLKIWECTFDLMTYFTKAKVKFAGQKVLDLGCGSGLLGITASKGGAREVHFQDYNGLVIDEVTLPNVVANVPLQGDSNGINEPAGKRQRKSEVAQETCKCRLFSGEWAEFCKLVLSEKLFVKYDLILTSETIYNPDYYSTLHETLLRLLSRNGRVLLASKAHYFGVGGGVHLFQKFVEEKGVFETRTLEVIDEGLKRFLMEMTFKCPS</sequence>
<comment type="function">
    <text evidence="1">Protein-L-histidine N-tele-methyltransferase that specifically monomethylates RPL3, thereby regulating translation elongation. Histidine methylation of RPL3 regulates translation elongation by slowing ribosome traversal on tyrosine codons: slower elongation provides enough time for proper folding of synthesized proteins and prevents cellular aggregation of tyrosine-rich proteins.</text>
</comment>
<comment type="catalytic activity">
    <reaction evidence="1">
        <text>L-histidyl-[protein] + S-adenosyl-L-methionine = N(tele)-methyl-L-histidyl-[protein] + S-adenosyl-L-homocysteine + H(+)</text>
        <dbReference type="Rhea" id="RHEA:19369"/>
        <dbReference type="Rhea" id="RHEA-COMP:9745"/>
        <dbReference type="Rhea" id="RHEA-COMP:11600"/>
        <dbReference type="ChEBI" id="CHEBI:15378"/>
        <dbReference type="ChEBI" id="CHEBI:16367"/>
        <dbReference type="ChEBI" id="CHEBI:29979"/>
        <dbReference type="ChEBI" id="CHEBI:57856"/>
        <dbReference type="ChEBI" id="CHEBI:59789"/>
        <dbReference type="EC" id="2.1.1.85"/>
    </reaction>
    <physiologicalReaction direction="left-to-right" evidence="1">
        <dbReference type="Rhea" id="RHEA:19370"/>
    </physiologicalReaction>
</comment>
<comment type="subunit">
    <text evidence="1">Interacts with GRWD1 and members of the heat shock protein 90 and 70 families; these proteins may possibly be methylation substrates for the enzyme.</text>
</comment>
<comment type="subcellular location">
    <subcellularLocation>
        <location evidence="1">Cytoplasm</location>
        <location evidence="1">Cytosol</location>
    </subcellularLocation>
    <subcellularLocation>
        <location evidence="1">Nucleus</location>
    </subcellularLocation>
    <subcellularLocation>
        <location evidence="1">Nucleus</location>
        <location evidence="1">Nucleolus</location>
    </subcellularLocation>
</comment>
<comment type="PTM">
    <text evidence="1">Monomethylated at His-144 through automethylation. Automethylation at His-144 positively regulates the methyltransferase activity toward RPL3. Probably methylated on other residues.</text>
</comment>
<comment type="similarity">
    <text evidence="3">Belongs to the methyltransferase superfamily. METTL18 family.</text>
</comment>
<reference key="1">
    <citation type="journal article" date="2004" name="Genome Res.">
        <title>The status, quality, and expansion of the NIH full-length cDNA project: the Mammalian Gene Collection (MGC).</title>
        <authorList>
            <consortium name="The MGC Project Team"/>
        </authorList>
    </citation>
    <scope>NUCLEOTIDE SEQUENCE [LARGE SCALE MRNA]</scope>
    <source>
        <tissue>Thymus</tissue>
    </source>
</reference>
<name>MET18_RAT</name>
<gene>
    <name evidence="4" type="primary">Mettl18</name>
</gene>
<accession>Q4KM84</accession>
<feature type="chain" id="PRO_0000247201" description="Histidine protein methyltransferase 1 homolog">
    <location>
        <begin position="1"/>
        <end position="362"/>
    </location>
</feature>
<feature type="region of interest" description="Disordered" evidence="2">
    <location>
        <begin position="28"/>
        <end position="89"/>
    </location>
</feature>
<feature type="short sequence motif" description="Nuclear localization signal" evidence="1">
    <location>
        <begin position="237"/>
        <end position="243"/>
    </location>
</feature>
<feature type="compositionally biased region" description="Polar residues" evidence="2">
    <location>
        <begin position="55"/>
        <end position="73"/>
    </location>
</feature>
<feature type="binding site" evidence="1">
    <location>
        <begin position="158"/>
        <end position="162"/>
    </location>
    <ligand>
        <name>S-adenosyl-L-methionine</name>
        <dbReference type="ChEBI" id="CHEBI:59789"/>
    </ligand>
</feature>
<feature type="binding site" evidence="1">
    <location>
        <position position="185"/>
    </location>
    <ligand>
        <name>S-adenosyl-L-methionine</name>
        <dbReference type="ChEBI" id="CHEBI:59789"/>
    </ligand>
</feature>
<feature type="binding site" evidence="1">
    <location>
        <begin position="206"/>
        <end position="208"/>
    </location>
    <ligand>
        <name>S-adenosyl-L-methionine</name>
        <dbReference type="ChEBI" id="CHEBI:59789"/>
    </ligand>
</feature>
<feature type="binding site" evidence="1">
    <location>
        <begin position="259"/>
        <end position="261"/>
    </location>
    <ligand>
        <name>S-adenosyl-L-methionine</name>
        <dbReference type="ChEBI" id="CHEBI:59789"/>
    </ligand>
</feature>
<feature type="binding site" evidence="1">
    <location>
        <position position="283"/>
    </location>
    <ligand>
        <name>S-adenosyl-L-methionine</name>
        <dbReference type="ChEBI" id="CHEBI:59789"/>
    </ligand>
</feature>
<feature type="modified residue" description="Phosphoserine" evidence="1">
    <location>
        <position position="62"/>
    </location>
</feature>
<feature type="modified residue" description="Phosphoserine" evidence="1">
    <location>
        <position position="67"/>
    </location>
</feature>
<feature type="modified residue" description="Tele-methylhistidine" evidence="1">
    <location>
        <position position="144"/>
    </location>
</feature>
<keyword id="KW-0963">Cytoplasm</keyword>
<keyword id="KW-0488">Methylation</keyword>
<keyword id="KW-0489">Methyltransferase</keyword>
<keyword id="KW-0539">Nucleus</keyword>
<keyword id="KW-0597">Phosphoprotein</keyword>
<keyword id="KW-1185">Reference proteome</keyword>
<keyword id="KW-0949">S-adenosyl-L-methionine</keyword>
<keyword id="KW-0808">Transferase</keyword>